<keyword id="KW-0004">4Fe-4S</keyword>
<keyword id="KW-0903">Direct protein sequencing</keyword>
<keyword id="KW-0408">Iron</keyword>
<keyword id="KW-0411">Iron-sulfur</keyword>
<keyword id="KW-0479">Metal-binding</keyword>
<keyword id="KW-0533">Nickel</keyword>
<keyword id="KW-0560">Oxidoreductase</keyword>
<keyword id="KW-0677">Repeat</keyword>
<evidence type="ECO:0000255" key="1">
    <source>
        <dbReference type="HAMAP-Rule" id="MF_01137"/>
    </source>
</evidence>
<evidence type="ECO:0000305" key="2"/>
<gene>
    <name evidence="1" type="primary">cdhA</name>
</gene>
<accession>P26692</accession>
<reference key="1">
    <citation type="journal article" date="1991" name="J. Biol. Chem.">
        <title>Cloning, expression, and sequence analysis of the genes for carbon monoxide dehydrogenase of Methanothrix soehngenii.</title>
        <authorList>
            <person name="Eggen R.I.L."/>
            <person name="Geerling A.C.M."/>
            <person name="Jetten M.S.M."/>
            <person name="de Vos W.M."/>
        </authorList>
    </citation>
    <scope>NUCLEOTIDE SEQUENCE [GENOMIC DNA]</scope>
    <scope>PARTIAL PROTEIN SEQUENCE</scope>
    <source>
        <strain>Opfikon / DSM 2139</strain>
    </source>
</reference>
<organism>
    <name type="scientific">Methanothrix soehngenii</name>
    <name type="common">Methanosaeta concilii</name>
    <dbReference type="NCBI Taxonomy" id="2223"/>
    <lineage>
        <taxon>Archaea</taxon>
        <taxon>Methanobacteriati</taxon>
        <taxon>Methanobacteriota</taxon>
        <taxon>Stenosarchaea group</taxon>
        <taxon>Methanomicrobia</taxon>
        <taxon>Methanotrichales</taxon>
        <taxon>Methanotrichaceae</taxon>
        <taxon>Methanothrix</taxon>
    </lineage>
</organism>
<name>ACDA_METSH</name>
<protein>
    <recommendedName>
        <fullName evidence="1">Acetyl-CoA decarbonylase/synthase complex subunit alpha</fullName>
        <shortName evidence="1">ACDS complex subunit alpha</shortName>
        <ecNumber evidence="1">1.2.7.4</ecNumber>
    </recommendedName>
    <alternativeName>
        <fullName evidence="1">ACDS complex carbon monoxide dehydrogenase subunit alpha</fullName>
        <shortName evidence="1">ACDS CODH subunit alpha</shortName>
    </alternativeName>
</protein>
<feature type="chain" id="PRO_0000155082" description="Acetyl-CoA decarbonylase/synthase complex subunit alpha">
    <location>
        <begin position="1"/>
        <end position="793"/>
    </location>
</feature>
<feature type="domain" description="4Fe-4S ferredoxin-type 1" evidence="1">
    <location>
        <begin position="393"/>
        <end position="422"/>
    </location>
</feature>
<feature type="domain" description="4Fe-4S ferredoxin-type 2" evidence="1">
    <location>
        <begin position="432"/>
        <end position="461"/>
    </location>
</feature>
<feature type="binding site" evidence="1">
    <location>
        <position position="55"/>
    </location>
    <ligand>
        <name>[4Fe-4S] cluster</name>
        <dbReference type="ChEBI" id="CHEBI:49883"/>
        <label>2</label>
    </ligand>
</feature>
<feature type="binding site" evidence="1">
    <location>
        <position position="58"/>
    </location>
    <ligand>
        <name>[4Fe-4S] cluster</name>
        <dbReference type="ChEBI" id="CHEBI:49883"/>
        <label>2</label>
    </ligand>
</feature>
<feature type="binding site" evidence="1">
    <location>
        <position position="63"/>
    </location>
    <ligand>
        <name>[4Fe-4S] cluster</name>
        <dbReference type="ChEBI" id="CHEBI:49883"/>
        <label>2</label>
    </ligand>
</feature>
<feature type="binding site" evidence="1">
    <location>
        <position position="73"/>
    </location>
    <ligand>
        <name>[4Fe-4S] cluster</name>
        <dbReference type="ChEBI" id="CHEBI:49883"/>
        <label>2</label>
    </ligand>
</feature>
<feature type="binding site" evidence="1">
    <location>
        <position position="96"/>
    </location>
    <ligand>
        <name>CO</name>
        <dbReference type="ChEBI" id="CHEBI:17245"/>
    </ligand>
</feature>
<feature type="binding site" evidence="1">
    <location>
        <position position="229"/>
    </location>
    <ligand>
        <name>[Ni-4Fe-4S] cluster</name>
        <dbReference type="ChEBI" id="CHEBI:47739"/>
    </ligand>
</feature>
<feature type="binding site" evidence="1">
    <location>
        <position position="257"/>
    </location>
    <ligand>
        <name>[Ni-4Fe-4S] cluster</name>
        <dbReference type="ChEBI" id="CHEBI:47739"/>
    </ligand>
</feature>
<feature type="binding site" evidence="1">
    <location>
        <position position="309"/>
    </location>
    <ligand>
        <name>[Ni-4Fe-4S] cluster</name>
        <dbReference type="ChEBI" id="CHEBI:47739"/>
    </ligand>
</feature>
<feature type="binding site" evidence="1">
    <location>
        <position position="403"/>
    </location>
    <ligand>
        <name>[4Fe-4S] cluster</name>
        <dbReference type="ChEBI" id="CHEBI:49883"/>
        <label>3</label>
    </ligand>
</feature>
<feature type="binding site" evidence="1">
    <location>
        <position position="406"/>
    </location>
    <ligand>
        <name>[4Fe-4S] cluster</name>
        <dbReference type="ChEBI" id="CHEBI:49883"/>
        <label>3</label>
    </ligand>
</feature>
<feature type="binding site" evidence="1">
    <location>
        <position position="409"/>
    </location>
    <ligand>
        <name>[4Fe-4S] cluster</name>
        <dbReference type="ChEBI" id="CHEBI:49883"/>
        <label>3</label>
    </ligand>
</feature>
<feature type="binding site" evidence="1">
    <location>
        <position position="413"/>
    </location>
    <ligand>
        <name>[4Fe-4S] cluster</name>
        <dbReference type="ChEBI" id="CHEBI:49883"/>
        <label>4</label>
    </ligand>
</feature>
<feature type="binding site" evidence="1">
    <location>
        <position position="441"/>
    </location>
    <ligand>
        <name>[4Fe-4S] cluster</name>
        <dbReference type="ChEBI" id="CHEBI:49883"/>
        <label>4</label>
    </ligand>
</feature>
<feature type="binding site" evidence="1">
    <location>
        <position position="444"/>
    </location>
    <ligand>
        <name>[4Fe-4S] cluster</name>
        <dbReference type="ChEBI" id="CHEBI:49883"/>
        <label>4</label>
    </ligand>
</feature>
<feature type="binding site" evidence="1">
    <location>
        <position position="447"/>
    </location>
    <ligand>
        <name>[4Fe-4S] cluster</name>
        <dbReference type="ChEBI" id="CHEBI:49883"/>
        <label>4</label>
    </ligand>
</feature>
<feature type="binding site" evidence="1">
    <location>
        <position position="451"/>
    </location>
    <ligand>
        <name>[4Fe-4S] cluster</name>
        <dbReference type="ChEBI" id="CHEBI:49883"/>
        <label>3</label>
    </ligand>
</feature>
<feature type="binding site" evidence="1">
    <location>
        <position position="509"/>
    </location>
    <ligand>
        <name>[Ni-4Fe-4S] cluster</name>
        <dbReference type="ChEBI" id="CHEBI:47739"/>
    </ligand>
</feature>
<feature type="binding site" evidence="1">
    <location>
        <position position="538"/>
    </location>
    <ligand>
        <name>[Ni-4Fe-4S] cluster</name>
        <dbReference type="ChEBI" id="CHEBI:47739"/>
    </ligand>
</feature>
<feature type="binding site" evidence="1">
    <location>
        <position position="573"/>
    </location>
    <ligand>
        <name>[Ni-4Fe-4S] cluster</name>
        <dbReference type="ChEBI" id="CHEBI:47739"/>
    </ligand>
</feature>
<comment type="function">
    <text evidence="1">Part of the ACDS complex that catalyzes the reversible cleavage of acetyl-CoA, allowing autotrophic growth from CO(2). The alpha-epsilon subcomponent functions as a carbon monoxide dehydrogenase.</text>
</comment>
<comment type="catalytic activity">
    <reaction evidence="1">
        <text>CO + 2 oxidized [2Fe-2S]-[ferredoxin] + H2O = 2 reduced [2Fe-2S]-[ferredoxin] + CO2 + 2 H(+)</text>
        <dbReference type="Rhea" id="RHEA:21040"/>
        <dbReference type="Rhea" id="RHEA-COMP:10000"/>
        <dbReference type="Rhea" id="RHEA-COMP:10001"/>
        <dbReference type="ChEBI" id="CHEBI:15377"/>
        <dbReference type="ChEBI" id="CHEBI:15378"/>
        <dbReference type="ChEBI" id="CHEBI:16526"/>
        <dbReference type="ChEBI" id="CHEBI:17245"/>
        <dbReference type="ChEBI" id="CHEBI:33737"/>
        <dbReference type="ChEBI" id="CHEBI:33738"/>
        <dbReference type="EC" id="1.2.7.4"/>
    </reaction>
</comment>
<comment type="cofactor">
    <cofactor evidence="1">
        <name>[4Fe-4S] cluster</name>
        <dbReference type="ChEBI" id="CHEBI:49883"/>
    </cofactor>
    <text evidence="2">Binds 6 [4Fe-4S] clusters per heterotetramer.</text>
</comment>
<comment type="cofactor">
    <cofactor evidence="1">
        <name>[Ni-4Fe-4S] cluster</name>
        <dbReference type="ChEBI" id="CHEBI:47739"/>
    </cofactor>
    <text evidence="1">Binds 2 [Ni-4Fe-4S] clusters per heterotetramer.</text>
</comment>
<comment type="subunit">
    <text evidence="1">Heterotetramer of two alpha and two epsilon subunits. The ACDS complex is made up of alpha, epsilon, beta, gamma and delta subunits with a probable stoichiometry of (alpha(2)epsilon(2))(4)-beta(8)-(gamma(1)delta(1))(8).</text>
</comment>
<comment type="domain">
    <text evidence="1">Cluster B is an all-cysteinyl-liganded 4Fe-4S cluster; cluster C is a mixed Ni-Fe-S cluster which is the active site of CO oxidation. Cluster D is also an all-cysteinyl-liganded 4Fe-4S cluster that bridges the two subunits of the CODH dimer. Contains two additional 4Fe-4S clusters, dubbed E and F, that probably transport electrons from ferredoxin to the B cluster.</text>
</comment>
<comment type="similarity">
    <text evidence="1">Belongs to the Ni-containing carbon monoxide dehydrogenase family.</text>
</comment>
<comment type="caution">
    <text evidence="2">This protein lacks the conserved Cys in positions 52 and 56; they are replaced by an Asp and a Thr, respectively. It is therefore possible that the D-cluster is either altered or missing in this protein, which may not form heterotetramers.</text>
</comment>
<proteinExistence type="evidence at protein level"/>
<dbReference type="EC" id="1.2.7.4" evidence="1"/>
<dbReference type="EMBL" id="M55280">
    <property type="protein sequence ID" value="AAA72934.1"/>
    <property type="molecule type" value="Genomic_DNA"/>
</dbReference>
<dbReference type="PIR" id="A39764">
    <property type="entry name" value="A39764"/>
</dbReference>
<dbReference type="SMR" id="P26692"/>
<dbReference type="GO" id="GO:0051539">
    <property type="term" value="F:4 iron, 4 sulfur cluster binding"/>
    <property type="evidence" value="ECO:0007669"/>
    <property type="project" value="UniProtKB-KW"/>
</dbReference>
<dbReference type="GO" id="GO:0043885">
    <property type="term" value="F:anaerobic carbon-monoxide dehydrogenase activity"/>
    <property type="evidence" value="ECO:0007669"/>
    <property type="project" value="UniProtKB-UniRule"/>
</dbReference>
<dbReference type="GO" id="GO:0050418">
    <property type="term" value="F:hydroxylamine reductase activity"/>
    <property type="evidence" value="ECO:0007669"/>
    <property type="project" value="TreeGrafter"/>
</dbReference>
<dbReference type="GO" id="GO:0005506">
    <property type="term" value="F:iron ion binding"/>
    <property type="evidence" value="ECO:0007669"/>
    <property type="project" value="UniProtKB-UniRule"/>
</dbReference>
<dbReference type="GO" id="GO:0016151">
    <property type="term" value="F:nickel cation binding"/>
    <property type="evidence" value="ECO:0007669"/>
    <property type="project" value="UniProtKB-UniRule"/>
</dbReference>
<dbReference type="GO" id="GO:0004601">
    <property type="term" value="F:peroxidase activity"/>
    <property type="evidence" value="ECO:0007669"/>
    <property type="project" value="TreeGrafter"/>
</dbReference>
<dbReference type="GO" id="GO:0006084">
    <property type="term" value="P:acetyl-CoA metabolic process"/>
    <property type="evidence" value="ECO:0007669"/>
    <property type="project" value="InterPro"/>
</dbReference>
<dbReference type="GO" id="GO:0042542">
    <property type="term" value="P:response to hydrogen peroxide"/>
    <property type="evidence" value="ECO:0007669"/>
    <property type="project" value="TreeGrafter"/>
</dbReference>
<dbReference type="CDD" id="cd01916">
    <property type="entry name" value="ACS_1"/>
    <property type="match status" value="1"/>
</dbReference>
<dbReference type="Gene3D" id="3.30.70.20">
    <property type="match status" value="1"/>
</dbReference>
<dbReference type="Gene3D" id="3.40.50.2030">
    <property type="match status" value="2"/>
</dbReference>
<dbReference type="HAMAP" id="MF_01137">
    <property type="entry name" value="CdhA"/>
    <property type="match status" value="1"/>
</dbReference>
<dbReference type="InterPro" id="IPR017896">
    <property type="entry name" value="4Fe4S_Fe-S-bd"/>
</dbReference>
<dbReference type="InterPro" id="IPR017900">
    <property type="entry name" value="4Fe4S_Fe_S_CS"/>
</dbReference>
<dbReference type="InterPro" id="IPR004460">
    <property type="entry name" value="CdhA"/>
</dbReference>
<dbReference type="InterPro" id="IPR004137">
    <property type="entry name" value="HCP/CODH"/>
</dbReference>
<dbReference type="InterPro" id="IPR016099">
    <property type="entry name" value="Prismane-like_a/b-sand"/>
</dbReference>
<dbReference type="InterPro" id="IPR011254">
    <property type="entry name" value="Prismane-like_sf"/>
</dbReference>
<dbReference type="NCBIfam" id="TIGR00314">
    <property type="entry name" value="cdhA"/>
    <property type="match status" value="1"/>
</dbReference>
<dbReference type="PANTHER" id="PTHR30109:SF6">
    <property type="entry name" value="ACETYL-COA DECARBONYLASE_SYNTHASE COMPLEX SUBUNIT ALPHA"/>
    <property type="match status" value="1"/>
</dbReference>
<dbReference type="PANTHER" id="PTHR30109">
    <property type="entry name" value="HYDROXYLAMINE REDUCTASE"/>
    <property type="match status" value="1"/>
</dbReference>
<dbReference type="Pfam" id="PF03063">
    <property type="entry name" value="Prismane"/>
    <property type="match status" value="2"/>
</dbReference>
<dbReference type="SUPFAM" id="SSF46548">
    <property type="entry name" value="alpha-helical ferredoxin"/>
    <property type="match status" value="1"/>
</dbReference>
<dbReference type="SUPFAM" id="SSF56821">
    <property type="entry name" value="Prismane protein-like"/>
    <property type="match status" value="1"/>
</dbReference>
<dbReference type="PROSITE" id="PS00198">
    <property type="entry name" value="4FE4S_FER_1"/>
    <property type="match status" value="2"/>
</dbReference>
<dbReference type="PROSITE" id="PS51379">
    <property type="entry name" value="4FE4S_FER_2"/>
    <property type="match status" value="2"/>
</dbReference>
<sequence length="793" mass="88152">MKNVQINIGAVVKEEDEWDQEMGPFPKPGVATLRDWDFKICNRYKIMYSPADDTCTLCTYGPCDLTGNKKGACGIDMAAACGKIVLVAVLMGTCAHTAHGRHLYHWCLDKFGDMPFDMGSEILVDAPLYRTILGKKPKSLKDFGEALEYCEEEIVQLLAACHTGQEGHYMDFESKSLHSGMIDSLGKEICDMLQTVAYDMPRGAADAPLVEIGMGTLDQNKGVLIAYGHNLAAGAEAMIYTEEHNLWDKVDIGGVCCTAIDLTRITETGRESKIPANLGPKAKVAGAMGWWRKMVRAGIMDTVIVDEQCVFCDVLEDCQQRHIPVIASNDKIMLGLPDRTNDSADAIVEDLVSFKMPGVAILDPVKAGEVAIRTAVAVKPKREQYKKESLFTEQQFKDTLATCTECNQCAFVCPPHIRISEMISEALKGNLEPFSSTYEVCVGCQRCEQTCPQEIPILKLYEYANREYIRNQKFKMRAGRGPVLDTEIRKVGAPLVLGQIPGVIALVGCSNYPNGTKECYDIAKEFVDRGYIVVATGCMAMDMSLYKDEDGKTIWEQYEGAFDGRNICNIGSCVANAHIHGAAIKVATIFAHRNERANYDDIADYIMSKVGACGVAWGAYSQKAASIATGVNRIGIPVVVQPSSVIYRRTFMGRTDKPEDWMVIDAKNGNMQQIEPAPEAMLYIAETKEEAMLEMAKLCFRPSDNTQGRGIKLTHYCDISMKYFGKLPDDWHLFVRDVKDLPLNYQTQMMKELEEKHGWKIDWKAKKFISGPLRPADVSFDPTNIPRKIRAKK</sequence>